<organismHost>
    <name type="scientific">Xanthomonas campestris pv. campestris</name>
    <dbReference type="NCBI Taxonomy" id="340"/>
</organismHost>
<accession>P68672</accession>
<accession>Q07484</accession>
<gene>
    <name type="primary">VII</name>
</gene>
<feature type="chain" id="PRO_0000098230" description="Tail virion protein G7P">
    <location>
        <begin position="1"/>
        <end position="38"/>
    </location>
</feature>
<feature type="transmembrane region" description="Helical" evidence="2">
    <location>
        <begin position="7"/>
        <end position="29"/>
    </location>
</feature>
<name>G7P_BPPHL</name>
<keyword id="KW-1043">Host membrane</keyword>
<keyword id="KW-0472">Membrane</keyword>
<keyword id="KW-1185">Reference proteome</keyword>
<keyword id="KW-0812">Transmembrane</keyword>
<keyword id="KW-1133">Transmembrane helix</keyword>
<keyword id="KW-0946">Virion</keyword>
<organism>
    <name type="scientific">Xanthomonas phage phiLf</name>
    <name type="common">Bacteriophage phi-Lf</name>
    <dbReference type="NCBI Taxonomy" id="28365"/>
    <lineage>
        <taxon>Viruses</taxon>
        <taxon>Monodnaviria</taxon>
        <taxon>Loebvirae</taxon>
        <taxon>Hofneiviricota</taxon>
        <taxon>Faserviricetes</taxon>
        <taxon>Tubulavirales</taxon>
        <taxon>Inoviridae</taxon>
    </lineage>
</organism>
<evidence type="ECO:0000250" key="1"/>
<evidence type="ECO:0000255" key="2"/>
<evidence type="ECO:0000305" key="3"/>
<sequence>MPSQEDAVAWSTGCCGLVIVWFVLGRLAGSVAGMFNDR</sequence>
<protein>
    <recommendedName>
        <fullName>Tail virion protein G7P</fullName>
    </recommendedName>
    <alternativeName>
        <fullName>Coat protein C, polypeptide I</fullName>
    </alternativeName>
    <alternativeName>
        <fullName>Gene 7 protein</fullName>
        <shortName>G7P</shortName>
    </alternativeName>
</protein>
<dbReference type="EMBL" id="X70331">
    <property type="protein sequence ID" value="CAA49798.1"/>
    <property type="molecule type" value="Genomic_DNA"/>
</dbReference>
<dbReference type="PIR" id="S33484">
    <property type="entry name" value="S33484"/>
</dbReference>
<dbReference type="SMR" id="P68672"/>
<dbReference type="Proteomes" id="UP000007611">
    <property type="component" value="Genome"/>
</dbReference>
<dbReference type="GO" id="GO:0033644">
    <property type="term" value="C:host cell membrane"/>
    <property type="evidence" value="ECO:0007669"/>
    <property type="project" value="UniProtKB-SubCell"/>
</dbReference>
<dbReference type="GO" id="GO:0016020">
    <property type="term" value="C:membrane"/>
    <property type="evidence" value="ECO:0007669"/>
    <property type="project" value="UniProtKB-KW"/>
</dbReference>
<dbReference type="GO" id="GO:0044423">
    <property type="term" value="C:virion component"/>
    <property type="evidence" value="ECO:0007669"/>
    <property type="project" value="UniProtKB-KW"/>
</dbReference>
<dbReference type="InterPro" id="IPR031377">
    <property type="entry name" value="Tail_VII"/>
</dbReference>
<dbReference type="Pfam" id="PF17091">
    <property type="entry name" value="Inovirus_G7P_1"/>
    <property type="match status" value="1"/>
</dbReference>
<comment type="function">
    <text evidence="1">May initiate with G9P the virion concomitant assembly-budding process, by interacting with the packaging signal of the viral genome. The assembly-budding takes place at the host inner membrane. In turn, G7P and G9P are present at the end of the filamentous virion that emerges first from the bacterial host (By similarity).</text>
</comment>
<comment type="subcellular location">
    <subcellularLocation>
        <location evidence="3">Virion</location>
    </subcellularLocation>
    <subcellularLocation>
        <location evidence="3">Host membrane</location>
        <topology evidence="3">Single-pass membrane protein</topology>
    </subcellularLocation>
    <text evidence="1">Prior to assembly, is found associated with the bacterial host inner membrane. There are about five copies of this protein per mature phage that are located on the tail side of the filamentous virion with G9P (By similarity).</text>
</comment>
<comment type="similarity">
    <text evidence="3">Belongs to the inovirus G7P protein family.</text>
</comment>
<proteinExistence type="inferred from homology"/>
<reference key="1">
    <citation type="journal article" date="1994" name="J. Gen. Virol.">
        <title>Nucleotide sequence determination, characterization and purification of the single-stranded DNA-binding protein and major coat protein of filamentous phage phi-Lf of Xanthomonas campestris pv. campestris.</title>
        <authorList>
            <person name="Wen F.-S."/>
            <person name="Tseng Y.-H."/>
        </authorList>
    </citation>
    <scope>NUCLEOTIDE SEQUENCE [GENOMIC DNA]</scope>
</reference>